<evidence type="ECO:0000250" key="1"/>
<evidence type="ECO:0000250" key="2">
    <source>
        <dbReference type="UniProtKB" id="Q8ZNR3"/>
    </source>
</evidence>
<evidence type="ECO:0000256" key="3">
    <source>
        <dbReference type="SAM" id="MobiDB-lite"/>
    </source>
</evidence>
<evidence type="ECO:0000269" key="4">
    <source>
    </source>
</evidence>
<evidence type="ECO:0000269" key="5">
    <source>
    </source>
</evidence>
<evidence type="ECO:0000305" key="6"/>
<name>SOPA_SALDU</name>
<reference key="1">
    <citation type="journal article" date="2000" name="Cell. Microbiol.">
        <title>The secreted effector protein of Salmonella dublin, SopA, is translocated into eukaryotic cells and influences the induction of enteritis.</title>
        <authorList>
            <person name="Wood M.W."/>
            <person name="Jones M.A."/>
            <person name="Watson P.R."/>
            <person name="Siber A.M."/>
            <person name="McCormick B.A."/>
            <person name="Hedges S."/>
            <person name="Rosqvist R."/>
            <person name="Wallis T.S."/>
            <person name="Galyov E.E."/>
        </authorList>
    </citation>
    <scope>NUCLEOTIDE SEQUENCE [GENOMIC DNA]</scope>
    <scope>PROTEIN SEQUENCE OF 55-64 AND 416-424</scope>
    <scope>FUNCTION</scope>
    <scope>SUBCELLULAR LOCATION</scope>
    <scope>DISRUPTION PHENOTYPE</scope>
    <source>
        <strain>2229</strain>
    </source>
</reference>
<reference key="2">
    <citation type="journal article" date="2005" name="J. Bacteriol.">
        <title>The Salmonella translocated effector SopA is targeted to the mitochondria of infected cells.</title>
        <authorList>
            <person name="Layton A.N."/>
            <person name="Brown P.J."/>
            <person name="Galyov E.E."/>
        </authorList>
    </citation>
    <scope>SUBCELLULAR LOCATION</scope>
    <scope>DOMAIN</scope>
    <source>
        <strain>2229</strain>
    </source>
</reference>
<comment type="function">
    <text evidence="2 4">Effector proteins function to alter host cell physiology and promote bacterial survival in host tissues. This protein is an E3 ubiquitin ligase that interferes with host's ubiquitination pathway (By similarity). Required for inducing polymorphonuclear leukocytes migration across the intestinal epithelium.</text>
</comment>
<comment type="catalytic activity">
    <reaction>
        <text>S-ubiquitinyl-[E2 ubiquitin-conjugating enzyme]-L-cysteine + [acceptor protein]-L-lysine = [E2 ubiquitin-conjugating enzyme]-L-cysteine + N(6)-ubiquitinyl-[acceptor protein]-L-lysine.</text>
        <dbReference type="EC" id="2.3.2.26"/>
    </reaction>
</comment>
<comment type="subcellular location">
    <subcellularLocation>
        <location evidence="4">Secreted</location>
    </subcellularLocation>
    <subcellularLocation>
        <location evidence="5">Host mitochondrion</location>
    </subcellularLocation>
    <text evidence="5">Secreted via type III secretion system 1 (SPI-1 T3SS), and delivered into the host cell via a Sip-dependent pathway. Localizes to the mitochondria of host cell.</text>
</comment>
<comment type="domain">
    <text evidence="5">Amino acids 100 to 347 are sufficient to target SopA to the mitochondria.</text>
</comment>
<comment type="PTM">
    <text evidence="2">Ubiquitinated in the presence of host E1 ubiquitin-activating enzyme, E2 ubiquitin-conjugating enzyme and ubiquitin.</text>
</comment>
<comment type="disruption phenotype">
    <text evidence="4">Mutants are significantly less enteropathogenic that the wild-type strain in intestinal ligated loops and are impaired in their ability to promote polymorphonuclear leukocytes movements across the model epithelial monolayer.</text>
</comment>
<comment type="similarity">
    <text evidence="6">Belongs to the SopA E3 ligase family.</text>
</comment>
<organism>
    <name type="scientific">Salmonella dublin</name>
    <dbReference type="NCBI Taxonomy" id="98360"/>
    <lineage>
        <taxon>Bacteria</taxon>
        <taxon>Pseudomonadati</taxon>
        <taxon>Pseudomonadota</taxon>
        <taxon>Gammaproteobacteria</taxon>
        <taxon>Enterobacterales</taxon>
        <taxon>Enterobacteriaceae</taxon>
        <taxon>Salmonella</taxon>
    </lineage>
</organism>
<gene>
    <name type="primary">sopA</name>
</gene>
<protein>
    <recommendedName>
        <fullName>E3 ubiquitin-protein ligase SopA</fullName>
        <ecNumber>2.3.2.26</ecNumber>
    </recommendedName>
    <alternativeName>
        <fullName evidence="6">HECT-type E3 ubiquitin transferase SopA</fullName>
    </alternativeName>
    <alternativeName>
        <fullName>Salmonella outer protein A</fullName>
    </alternativeName>
    <alternativeName>
        <fullName>Secreted effector protein SopA</fullName>
    </alternativeName>
</protein>
<keyword id="KW-0903">Direct protein sequencing</keyword>
<keyword id="KW-1045">Host mitochondrion</keyword>
<keyword id="KW-0964">Secreted</keyword>
<keyword id="KW-0808">Transferase</keyword>
<keyword id="KW-0832">Ubl conjugation</keyword>
<keyword id="KW-0833">Ubl conjugation pathway</keyword>
<keyword id="KW-0843">Virulence</keyword>
<proteinExistence type="evidence at protein level"/>
<sequence>MKISSGAINFSTIPNQVKKLITSIREHTKNGLASKITSVKNTHTSLNEKFKTGKDSPIEFALPQKIKDFFQPKDKNTLNKTLITVKNIKDTNNAGKKNISAEDVSKMNAAFMRKHIANQTCDYNYRMTGAAPLPGGVSVSANNRPTVSEGRTPPVSPSLSLQATSSPSSPADWAKKLTDAVLRQKAGETLTAADRDFSNADFRNITFSKILPPSFMERDGDIIKGFNFSNSKFTYSDISHLHFDECRFTYSTLSDVVCSNTKFSNSDMNEVVLQYSITTQQQPSFIHTTLKNTLIRHKANLSGVILNEPHNSSPPSVSGGGNFIRLGDIWLQMPLLWTENAVDGFLNHEHNNGKSILMTIDSLPDKYSQEKVQAMEDLVKSLRGGRLTEACIRPVESSLVSVLAHPPYTQSALIREWLGPVQERFFAHQCQTYNDVPLPTPDTYYQQRILPVLLDSFDRNSAAMTTHSGLFNQVILHCMTGVDCTDGTRQKAAALYEQYLAHPAVSPHIHNGLFGNYDGSSDWTTRAADNFLLLSSQDSDTAMMLSTDTLLTMLNPTPDTAWDNFYLQRAGENVSTAQISPVELFRHDFPVFLAAFNQQATQRRFGELIDIILSTEEHGELNQQFLAATNQKHSTVKLIDDASVSRLATIFDPLLPEGKLSPAHYQHILSAYHLTDATPQKQAETLFCLSTAFARYSSSAIFGTEHDSPPALRGYAEALMQKAWELSPAIFPTSEQFTDWSDRFHGLHGAFTCTCVVADSMQRHARKYFPSVLSSILPLSWA</sequence>
<feature type="chain" id="PRO_0000395848" description="E3 ubiquitin-protein ligase SopA">
    <location>
        <begin position="1"/>
        <end position="782"/>
    </location>
</feature>
<feature type="region of interest" description="Disordered" evidence="3">
    <location>
        <begin position="137"/>
        <end position="171"/>
    </location>
</feature>
<feature type="compositionally biased region" description="Low complexity" evidence="3">
    <location>
        <begin position="157"/>
        <end position="171"/>
    </location>
</feature>
<feature type="active site" description="Glycyl thioester intermediate" evidence="1">
    <location>
        <position position="753"/>
    </location>
</feature>
<feature type="sequence conflict" description="In Ref. 1; AA sequence." evidence="6" ref="1">
    <original>W</original>
    <variation>V</variation>
    <location>
        <position position="417"/>
    </location>
</feature>
<dbReference type="EC" id="2.3.2.26"/>
<dbReference type="EMBL" id="AF121227">
    <property type="protein sequence ID" value="AAD46479.1"/>
    <property type="molecule type" value="Genomic_DNA"/>
</dbReference>
<dbReference type="SMR" id="Q9S4P4"/>
<dbReference type="GO" id="GO:0005576">
    <property type="term" value="C:extracellular region"/>
    <property type="evidence" value="ECO:0000314"/>
    <property type="project" value="UniProtKB"/>
</dbReference>
<dbReference type="GO" id="GO:0033650">
    <property type="term" value="C:host cell mitochondrion"/>
    <property type="evidence" value="ECO:0000314"/>
    <property type="project" value="UniProtKB"/>
</dbReference>
<dbReference type="GO" id="GO:0004842">
    <property type="term" value="F:ubiquitin-protein transferase activity"/>
    <property type="evidence" value="ECO:0000250"/>
    <property type="project" value="UniProtKB"/>
</dbReference>
<dbReference type="GO" id="GO:0016567">
    <property type="term" value="P:protein ubiquitination"/>
    <property type="evidence" value="ECO:0000250"/>
    <property type="project" value="UniProtKB"/>
</dbReference>
<dbReference type="FunFam" id="1.25.40.300:FF:000001">
    <property type="entry name" value="SPI-1 type III secretion system effector HECT-type E3 ubiquitin transferase SopA"/>
    <property type="match status" value="1"/>
</dbReference>
<dbReference type="FunFam" id="2.160.20.80:FF:000005">
    <property type="entry name" value="SPI-1 type III secretion system effector HECT-type E3 ubiquitin transferase SopA"/>
    <property type="match status" value="1"/>
</dbReference>
<dbReference type="Gene3D" id="2.160.20.80">
    <property type="entry name" value="E3 ubiquitin-protein ligase SopA"/>
    <property type="match status" value="1"/>
</dbReference>
<dbReference type="Gene3D" id="1.10.4140.10">
    <property type="entry name" value="effector protein (NleL)"/>
    <property type="match status" value="1"/>
</dbReference>
<dbReference type="Gene3D" id="3.40.1850.10">
    <property type="entry name" value="HECT-like ubiquitin ligase"/>
    <property type="match status" value="1"/>
</dbReference>
<dbReference type="Gene3D" id="1.25.40.300">
    <property type="entry name" value="Putative secreted effector protein"/>
    <property type="match status" value="1"/>
</dbReference>
<dbReference type="InterPro" id="IPR025725">
    <property type="entry name" value="SopA-like_cat"/>
</dbReference>
<dbReference type="InterPro" id="IPR038270">
    <property type="entry name" value="SopA-like_catalytic_sf"/>
</dbReference>
<dbReference type="InterPro" id="IPR025726">
    <property type="entry name" value="SopA-like_central"/>
</dbReference>
<dbReference type="NCBIfam" id="NF011904">
    <property type="entry name" value="PRK15377.1"/>
    <property type="match status" value="1"/>
</dbReference>
<dbReference type="Pfam" id="PF13981">
    <property type="entry name" value="SopA"/>
    <property type="match status" value="1"/>
</dbReference>
<dbReference type="Pfam" id="PF13979">
    <property type="entry name" value="SopA_C"/>
    <property type="match status" value="1"/>
</dbReference>
<dbReference type="SUPFAM" id="SSF141571">
    <property type="entry name" value="Pentapeptide repeat-like"/>
    <property type="match status" value="1"/>
</dbReference>
<accession>Q9S4P4</accession>